<name>RL10_BACCZ</name>
<gene>
    <name evidence="1" type="primary">rplJ</name>
    <name type="ordered locus">BCE33L0093</name>
</gene>
<comment type="function">
    <text evidence="1">Forms part of the ribosomal stalk, playing a central role in the interaction of the ribosome with GTP-bound translation factors.</text>
</comment>
<comment type="subunit">
    <text evidence="1">Part of the ribosomal stalk of the 50S ribosomal subunit. The N-terminus interacts with L11 and the large rRNA to form the base of the stalk. The C-terminus forms an elongated spine to which L12 dimers bind in a sequential fashion forming a multimeric L10(L12)X complex.</text>
</comment>
<comment type="similarity">
    <text evidence="1">Belongs to the universal ribosomal protein uL10 family.</text>
</comment>
<reference key="1">
    <citation type="journal article" date="2006" name="J. Bacteriol.">
        <title>Pathogenomic sequence analysis of Bacillus cereus and Bacillus thuringiensis isolates closely related to Bacillus anthracis.</title>
        <authorList>
            <person name="Han C.S."/>
            <person name="Xie G."/>
            <person name="Challacombe J.F."/>
            <person name="Altherr M.R."/>
            <person name="Bhotika S.S."/>
            <person name="Bruce D."/>
            <person name="Campbell C.S."/>
            <person name="Campbell M.L."/>
            <person name="Chen J."/>
            <person name="Chertkov O."/>
            <person name="Cleland C."/>
            <person name="Dimitrijevic M."/>
            <person name="Doggett N.A."/>
            <person name="Fawcett J.J."/>
            <person name="Glavina T."/>
            <person name="Goodwin L.A."/>
            <person name="Hill K.K."/>
            <person name="Hitchcock P."/>
            <person name="Jackson P.J."/>
            <person name="Keim P."/>
            <person name="Kewalramani A.R."/>
            <person name="Longmire J."/>
            <person name="Lucas S."/>
            <person name="Malfatti S."/>
            <person name="McMurry K."/>
            <person name="Meincke L.J."/>
            <person name="Misra M."/>
            <person name="Moseman B.L."/>
            <person name="Mundt M."/>
            <person name="Munk A.C."/>
            <person name="Okinaka R.T."/>
            <person name="Parson-Quintana B."/>
            <person name="Reilly L.P."/>
            <person name="Richardson P."/>
            <person name="Robinson D.L."/>
            <person name="Rubin E."/>
            <person name="Saunders E."/>
            <person name="Tapia R."/>
            <person name="Tesmer J.G."/>
            <person name="Thayer N."/>
            <person name="Thompson L.S."/>
            <person name="Tice H."/>
            <person name="Ticknor L.O."/>
            <person name="Wills P.L."/>
            <person name="Brettin T.S."/>
            <person name="Gilna P."/>
        </authorList>
    </citation>
    <scope>NUCLEOTIDE SEQUENCE [LARGE SCALE GENOMIC DNA]</scope>
    <source>
        <strain>ZK / E33L</strain>
    </source>
</reference>
<protein>
    <recommendedName>
        <fullName evidence="1">Large ribosomal subunit protein uL10</fullName>
    </recommendedName>
    <alternativeName>
        <fullName evidence="2">50S ribosomal protein L10</fullName>
    </alternativeName>
</protein>
<evidence type="ECO:0000255" key="1">
    <source>
        <dbReference type="HAMAP-Rule" id="MF_00362"/>
    </source>
</evidence>
<evidence type="ECO:0000305" key="2"/>
<proteinExistence type="inferred from homology"/>
<accession>Q63HA1</accession>
<organism>
    <name type="scientific">Bacillus cereus (strain ZK / E33L)</name>
    <dbReference type="NCBI Taxonomy" id="288681"/>
    <lineage>
        <taxon>Bacteria</taxon>
        <taxon>Bacillati</taxon>
        <taxon>Bacillota</taxon>
        <taxon>Bacilli</taxon>
        <taxon>Bacillales</taxon>
        <taxon>Bacillaceae</taxon>
        <taxon>Bacillus</taxon>
        <taxon>Bacillus cereus group</taxon>
    </lineage>
</organism>
<feature type="chain" id="PRO_0000154584" description="Large ribosomal subunit protein uL10">
    <location>
        <begin position="1"/>
        <end position="166"/>
    </location>
</feature>
<dbReference type="EMBL" id="CP000001">
    <property type="protein sequence ID" value="AAU20137.1"/>
    <property type="molecule type" value="Genomic_DNA"/>
</dbReference>
<dbReference type="RefSeq" id="WP_000048716.1">
    <property type="nucleotide sequence ID" value="NZ_CP009968.1"/>
</dbReference>
<dbReference type="SMR" id="Q63HA1"/>
<dbReference type="GeneID" id="93010954"/>
<dbReference type="KEGG" id="bcz:BCE33L0093"/>
<dbReference type="PATRIC" id="fig|288681.22.peg.58"/>
<dbReference type="Proteomes" id="UP000002612">
    <property type="component" value="Chromosome"/>
</dbReference>
<dbReference type="GO" id="GO:0015934">
    <property type="term" value="C:large ribosomal subunit"/>
    <property type="evidence" value="ECO:0007669"/>
    <property type="project" value="InterPro"/>
</dbReference>
<dbReference type="GO" id="GO:0070180">
    <property type="term" value="F:large ribosomal subunit rRNA binding"/>
    <property type="evidence" value="ECO:0007669"/>
    <property type="project" value="UniProtKB-UniRule"/>
</dbReference>
<dbReference type="GO" id="GO:0003735">
    <property type="term" value="F:structural constituent of ribosome"/>
    <property type="evidence" value="ECO:0007669"/>
    <property type="project" value="InterPro"/>
</dbReference>
<dbReference type="GO" id="GO:0006412">
    <property type="term" value="P:translation"/>
    <property type="evidence" value="ECO:0007669"/>
    <property type="project" value="UniProtKB-UniRule"/>
</dbReference>
<dbReference type="CDD" id="cd05797">
    <property type="entry name" value="Ribosomal_L10"/>
    <property type="match status" value="1"/>
</dbReference>
<dbReference type="FunFam" id="3.30.70.1730:FF:000001">
    <property type="entry name" value="50S ribosomal protein L10"/>
    <property type="match status" value="1"/>
</dbReference>
<dbReference type="Gene3D" id="3.30.70.1730">
    <property type="match status" value="1"/>
</dbReference>
<dbReference type="Gene3D" id="6.10.250.290">
    <property type="match status" value="1"/>
</dbReference>
<dbReference type="HAMAP" id="MF_00362">
    <property type="entry name" value="Ribosomal_uL10"/>
    <property type="match status" value="1"/>
</dbReference>
<dbReference type="InterPro" id="IPR001790">
    <property type="entry name" value="Ribosomal_uL10"/>
</dbReference>
<dbReference type="InterPro" id="IPR043141">
    <property type="entry name" value="Ribosomal_uL10-like_sf"/>
</dbReference>
<dbReference type="InterPro" id="IPR022973">
    <property type="entry name" value="Ribosomal_uL10_bac"/>
</dbReference>
<dbReference type="InterPro" id="IPR047865">
    <property type="entry name" value="Ribosomal_uL10_bac_type"/>
</dbReference>
<dbReference type="InterPro" id="IPR002363">
    <property type="entry name" value="Ribosomal_uL10_CS_bac"/>
</dbReference>
<dbReference type="NCBIfam" id="NF000955">
    <property type="entry name" value="PRK00099.1-1"/>
    <property type="match status" value="1"/>
</dbReference>
<dbReference type="PANTHER" id="PTHR11560">
    <property type="entry name" value="39S RIBOSOMAL PROTEIN L10, MITOCHONDRIAL"/>
    <property type="match status" value="1"/>
</dbReference>
<dbReference type="Pfam" id="PF00466">
    <property type="entry name" value="Ribosomal_L10"/>
    <property type="match status" value="1"/>
</dbReference>
<dbReference type="SUPFAM" id="SSF160369">
    <property type="entry name" value="Ribosomal protein L10-like"/>
    <property type="match status" value="1"/>
</dbReference>
<dbReference type="PROSITE" id="PS01109">
    <property type="entry name" value="RIBOSOMAL_L10"/>
    <property type="match status" value="1"/>
</dbReference>
<sequence>MSKVIETKQQVVTEIADKLRASKSTIVVDYRGLTVSEATELRKQLREAGVEFKVYKNSLTRRAAESAEMAELNEFLTGPNAIAFSNEDVVAPAKVLNDFAKDHEALEIKAGVIEGKLVTLDEVKAIATLPSREGLLSMLLSVLQAPIRNLALATKAVADQKEEQGA</sequence>
<keyword id="KW-0687">Ribonucleoprotein</keyword>
<keyword id="KW-0689">Ribosomal protein</keyword>
<keyword id="KW-0694">RNA-binding</keyword>
<keyword id="KW-0699">rRNA-binding</keyword>